<dbReference type="EC" id="3.6.1.-" evidence="1"/>
<dbReference type="EMBL" id="CP000948">
    <property type="protein sequence ID" value="ACB01574.1"/>
    <property type="molecule type" value="Genomic_DNA"/>
</dbReference>
<dbReference type="RefSeq" id="WP_001336137.1">
    <property type="nucleotide sequence ID" value="NC_010473.1"/>
</dbReference>
<dbReference type="SMR" id="B1XFN4"/>
<dbReference type="KEGG" id="ecd:ECDH10B_0402"/>
<dbReference type="HOGENOM" id="CLU_044146_5_2_6"/>
<dbReference type="GO" id="GO:0002145">
    <property type="term" value="F:4-amino-5-hydroxymethyl-2-methylpyrimidine diphosphatase activity"/>
    <property type="evidence" value="ECO:0007669"/>
    <property type="project" value="RHEA"/>
</dbReference>
<dbReference type="GO" id="GO:0000287">
    <property type="term" value="F:magnesium ion binding"/>
    <property type="evidence" value="ECO:0000250"/>
    <property type="project" value="UniProtKB"/>
</dbReference>
<dbReference type="GO" id="GO:0016791">
    <property type="term" value="F:phosphatase activity"/>
    <property type="evidence" value="ECO:0000250"/>
    <property type="project" value="UniProtKB"/>
</dbReference>
<dbReference type="CDD" id="cd07516">
    <property type="entry name" value="HAD_Pase"/>
    <property type="match status" value="1"/>
</dbReference>
<dbReference type="FunFam" id="3.30.1240.10:FF:000002">
    <property type="entry name" value="HMP-PP phosphatase"/>
    <property type="match status" value="1"/>
</dbReference>
<dbReference type="Gene3D" id="3.30.1240.10">
    <property type="match status" value="1"/>
</dbReference>
<dbReference type="Gene3D" id="3.40.50.1000">
    <property type="entry name" value="HAD superfamily/HAD-like"/>
    <property type="match status" value="1"/>
</dbReference>
<dbReference type="HAMAP" id="MF_01847">
    <property type="entry name" value="HMP_PP_phosphat"/>
    <property type="match status" value="1"/>
</dbReference>
<dbReference type="InterPro" id="IPR000150">
    <property type="entry name" value="Cof"/>
</dbReference>
<dbReference type="InterPro" id="IPR036412">
    <property type="entry name" value="HAD-like_sf"/>
</dbReference>
<dbReference type="InterPro" id="IPR006379">
    <property type="entry name" value="HAD-SF_hydro_IIB"/>
</dbReference>
<dbReference type="InterPro" id="IPR023214">
    <property type="entry name" value="HAD_sf"/>
</dbReference>
<dbReference type="InterPro" id="IPR023938">
    <property type="entry name" value="HMP-PP_phosphatase"/>
</dbReference>
<dbReference type="NCBIfam" id="TIGR00099">
    <property type="entry name" value="Cof-subfamily"/>
    <property type="match status" value="1"/>
</dbReference>
<dbReference type="NCBIfam" id="TIGR01484">
    <property type="entry name" value="HAD-SF-IIB"/>
    <property type="match status" value="1"/>
</dbReference>
<dbReference type="NCBIfam" id="NF011705">
    <property type="entry name" value="PRK15126.1"/>
    <property type="match status" value="1"/>
</dbReference>
<dbReference type="PANTHER" id="PTHR47267">
    <property type="match status" value="1"/>
</dbReference>
<dbReference type="PANTHER" id="PTHR47267:SF2">
    <property type="entry name" value="HMP-PP PHOSPHATASE"/>
    <property type="match status" value="1"/>
</dbReference>
<dbReference type="Pfam" id="PF08282">
    <property type="entry name" value="Hydrolase_3"/>
    <property type="match status" value="1"/>
</dbReference>
<dbReference type="SFLD" id="SFLDG01140">
    <property type="entry name" value="C2.B:_Phosphomannomutase_and_P"/>
    <property type="match status" value="1"/>
</dbReference>
<dbReference type="SFLD" id="SFLDS00003">
    <property type="entry name" value="Haloacid_Dehalogenase"/>
    <property type="match status" value="1"/>
</dbReference>
<dbReference type="SUPFAM" id="SSF56784">
    <property type="entry name" value="HAD-like"/>
    <property type="match status" value="1"/>
</dbReference>
<dbReference type="PROSITE" id="PS01228">
    <property type="entry name" value="COF_1"/>
    <property type="match status" value="1"/>
</dbReference>
<dbReference type="PROSITE" id="PS01229">
    <property type="entry name" value="COF_2"/>
    <property type="match status" value="1"/>
</dbReference>
<reference key="1">
    <citation type="journal article" date="2008" name="J. Bacteriol.">
        <title>The complete genome sequence of Escherichia coli DH10B: insights into the biology of a laboratory workhorse.</title>
        <authorList>
            <person name="Durfee T."/>
            <person name="Nelson R."/>
            <person name="Baldwin S."/>
            <person name="Plunkett G. III"/>
            <person name="Burland V."/>
            <person name="Mau B."/>
            <person name="Petrosino J.F."/>
            <person name="Qin X."/>
            <person name="Muzny D.M."/>
            <person name="Ayele M."/>
            <person name="Gibbs R.A."/>
            <person name="Csorgo B."/>
            <person name="Posfai G."/>
            <person name="Weinstock G.M."/>
            <person name="Blattner F.R."/>
        </authorList>
    </citation>
    <scope>NUCLEOTIDE SEQUENCE [LARGE SCALE GENOMIC DNA]</scope>
    <source>
        <strain>K12 / DH10B</strain>
    </source>
</reference>
<comment type="function">
    <text evidence="1">Catalyzes the hydrolysis of 4-amino-2-methyl-5-hydroxymethylpyrimidine pyrophosphate (HMP-PP) to 4-amino-2-methyl-5-hydroxymethylpyrimidine phosphate (HMP-P).</text>
</comment>
<comment type="catalytic activity">
    <reaction evidence="1">
        <text>4-amino-2-methyl-5-(diphosphooxymethyl)pyrimidine + H2O = 4-amino-2-methyl-5-(phosphooxymethyl)pyrimidine + phosphate + H(+)</text>
        <dbReference type="Rhea" id="RHEA:27914"/>
        <dbReference type="ChEBI" id="CHEBI:15377"/>
        <dbReference type="ChEBI" id="CHEBI:15378"/>
        <dbReference type="ChEBI" id="CHEBI:43474"/>
        <dbReference type="ChEBI" id="CHEBI:57841"/>
        <dbReference type="ChEBI" id="CHEBI:58354"/>
    </reaction>
</comment>
<comment type="cofactor">
    <cofactor evidence="1">
        <name>Mg(2+)</name>
        <dbReference type="ChEBI" id="CHEBI:18420"/>
    </cofactor>
</comment>
<comment type="similarity">
    <text evidence="1">Belongs to the HAD-like hydrolase superfamily. Cof family.</text>
</comment>
<keyword id="KW-0378">Hydrolase</keyword>
<keyword id="KW-0460">Magnesium</keyword>
<keyword id="KW-0479">Metal-binding</keyword>
<proteinExistence type="inferred from homology"/>
<evidence type="ECO:0000255" key="1">
    <source>
        <dbReference type="HAMAP-Rule" id="MF_01847"/>
    </source>
</evidence>
<protein>
    <recommendedName>
        <fullName evidence="1">HMP-PP phosphatase</fullName>
        <ecNumber evidence="1">3.6.1.-</ecNumber>
    </recommendedName>
</protein>
<accession>B1XFN4</accession>
<gene>
    <name evidence="1" type="primary">cof</name>
    <name type="ordered locus">ECDH10B_0402</name>
</gene>
<sequence length="272" mass="30371">MARLAAFDMDGTLLMPDHHLGEKTLSTLARLRERDITLTFATGRHALEMQHILGALSLDAYLITGNGTRVHSLEGELLHRDDLPADVAELVLYQQWDTRASMHIFNDDGWFTGKEIPALLQAFVYSGFRYQIIDVKKMPLGSVTKICFCGDHDDLTRLQIQLYEALGERAHLCFSATDCLEVLPVGCNKGAALTVLTQHLGLSLRDCMAFGDAMNDREMLVSVGSGFIMGNAMPQLRAELPHLPVIGHCRNQAVSHYLTHWLDYPHLPYSPE</sequence>
<feature type="chain" id="PRO_0000342978" description="HMP-PP phosphatase">
    <location>
        <begin position="1"/>
        <end position="272"/>
    </location>
</feature>
<feature type="active site" description="Nucleophile" evidence="1">
    <location>
        <position position="8"/>
    </location>
</feature>
<feature type="binding site" evidence="1">
    <location>
        <position position="8"/>
    </location>
    <ligand>
        <name>Mg(2+)</name>
        <dbReference type="ChEBI" id="CHEBI:18420"/>
    </ligand>
</feature>
<feature type="binding site" evidence="1">
    <location>
        <position position="10"/>
    </location>
    <ligand>
        <name>Mg(2+)</name>
        <dbReference type="ChEBI" id="CHEBI:18420"/>
    </ligand>
</feature>
<feature type="binding site" evidence="1">
    <location>
        <position position="212"/>
    </location>
    <ligand>
        <name>Mg(2+)</name>
        <dbReference type="ChEBI" id="CHEBI:18420"/>
    </ligand>
</feature>
<organism>
    <name type="scientific">Escherichia coli (strain K12 / DH10B)</name>
    <dbReference type="NCBI Taxonomy" id="316385"/>
    <lineage>
        <taxon>Bacteria</taxon>
        <taxon>Pseudomonadati</taxon>
        <taxon>Pseudomonadota</taxon>
        <taxon>Gammaproteobacteria</taxon>
        <taxon>Enterobacterales</taxon>
        <taxon>Enterobacteriaceae</taxon>
        <taxon>Escherichia</taxon>
    </lineage>
</organism>
<name>COF_ECODH</name>